<dbReference type="EMBL" id="CR382123">
    <property type="protein sequence ID" value="CAH01110.1"/>
    <property type="molecule type" value="Genomic_DNA"/>
</dbReference>
<dbReference type="EMBL" id="AJ312189">
    <property type="protein sequence ID" value="CAC85376.1"/>
    <property type="molecule type" value="Genomic_DNA"/>
</dbReference>
<dbReference type="RefSeq" id="XP_452259.1">
    <property type="nucleotide sequence ID" value="XM_452259.1"/>
</dbReference>
<dbReference type="SMR" id="Q6CUY0"/>
<dbReference type="FunCoup" id="Q6CUY0">
    <property type="interactions" value="281"/>
</dbReference>
<dbReference type="STRING" id="284590.Q6CUY0"/>
<dbReference type="PaxDb" id="284590-Q6CUY0"/>
<dbReference type="KEGG" id="kla:KLLA0_C01430g"/>
<dbReference type="eggNOG" id="KOG4100">
    <property type="taxonomic scope" value="Eukaryota"/>
</dbReference>
<dbReference type="HOGENOM" id="CLU_102310_1_0_1"/>
<dbReference type="InParanoid" id="Q6CUY0"/>
<dbReference type="OMA" id="WQQTNEN"/>
<dbReference type="Proteomes" id="UP000000598">
    <property type="component" value="Chromosome C"/>
</dbReference>
<dbReference type="GO" id="GO:0005758">
    <property type="term" value="C:mitochondrial intermembrane space"/>
    <property type="evidence" value="ECO:0007669"/>
    <property type="project" value="TreeGrafter"/>
</dbReference>
<dbReference type="GO" id="GO:0005759">
    <property type="term" value="C:mitochondrial matrix"/>
    <property type="evidence" value="ECO:0007669"/>
    <property type="project" value="UniProtKB-SubCell"/>
</dbReference>
<dbReference type="GO" id="GO:0006094">
    <property type="term" value="P:gluconeogenesis"/>
    <property type="evidence" value="ECO:0007669"/>
    <property type="project" value="UniProtKB-KW"/>
</dbReference>
<dbReference type="GO" id="GO:0034553">
    <property type="term" value="P:mitochondrial respiratory chain complex II assembly"/>
    <property type="evidence" value="ECO:0007669"/>
    <property type="project" value="InterPro"/>
</dbReference>
<dbReference type="GO" id="GO:0006105">
    <property type="term" value="P:succinate metabolic process"/>
    <property type="evidence" value="ECO:0007669"/>
    <property type="project" value="TreeGrafter"/>
</dbReference>
<dbReference type="CDD" id="cd20270">
    <property type="entry name" value="Complex1_LYR_SDHAF3_LYRM10"/>
    <property type="match status" value="1"/>
</dbReference>
<dbReference type="InterPro" id="IPR008381">
    <property type="entry name" value="SDHAF3/Sdh7"/>
</dbReference>
<dbReference type="PANTHER" id="PTHR13137">
    <property type="entry name" value="DC11 ACN9 HOMOLOG"/>
    <property type="match status" value="1"/>
</dbReference>
<dbReference type="PANTHER" id="PTHR13137:SF6">
    <property type="entry name" value="SUCCINATE DEHYDROGENASE ASSEMBLY FACTOR 3, MITOCHONDRIAL"/>
    <property type="match status" value="1"/>
</dbReference>
<dbReference type="Pfam" id="PF13233">
    <property type="entry name" value="Complex1_LYR_2"/>
    <property type="match status" value="1"/>
</dbReference>
<name>SDHF3_KLULA</name>
<keyword id="KW-0143">Chaperone</keyword>
<keyword id="KW-0312">Gluconeogenesis</keyword>
<keyword id="KW-0496">Mitochondrion</keyword>
<keyword id="KW-1185">Reference proteome</keyword>
<keyword id="KW-0809">Transit peptide</keyword>
<gene>
    <name type="ordered locus">KLLA0C01430g</name>
</gene>
<evidence type="ECO:0000250" key="1">
    <source>
        <dbReference type="UniProtKB" id="Q04401"/>
    </source>
</evidence>
<evidence type="ECO:0000250" key="2">
    <source>
        <dbReference type="UniProtKB" id="Q8SZ16"/>
    </source>
</evidence>
<evidence type="ECO:0000255" key="3"/>
<evidence type="ECO:0000305" key="4"/>
<organism>
    <name type="scientific">Kluyveromyces lactis (strain ATCC 8585 / CBS 2359 / DSM 70799 / NBRC 1267 / NRRL Y-1140 / WM37)</name>
    <name type="common">Yeast</name>
    <name type="synonym">Candida sphaerica</name>
    <dbReference type="NCBI Taxonomy" id="284590"/>
    <lineage>
        <taxon>Eukaryota</taxon>
        <taxon>Fungi</taxon>
        <taxon>Dikarya</taxon>
        <taxon>Ascomycota</taxon>
        <taxon>Saccharomycotina</taxon>
        <taxon>Saccharomycetes</taxon>
        <taxon>Saccharomycetales</taxon>
        <taxon>Saccharomycetaceae</taxon>
        <taxon>Kluyveromyces</taxon>
    </lineage>
</organism>
<protein>
    <recommendedName>
        <fullName evidence="1">Succinate dehydrogenase assembly factor 3, mitochondrial</fullName>
        <shortName evidence="1">SDH assembly factor 3</shortName>
        <shortName evidence="1">SDHAF3</shortName>
    </recommendedName>
</protein>
<reference key="1">
    <citation type="journal article" date="2004" name="Nature">
        <title>Genome evolution in yeasts.</title>
        <authorList>
            <person name="Dujon B."/>
            <person name="Sherman D."/>
            <person name="Fischer G."/>
            <person name="Durrens P."/>
            <person name="Casaregola S."/>
            <person name="Lafontaine I."/>
            <person name="de Montigny J."/>
            <person name="Marck C."/>
            <person name="Neuveglise C."/>
            <person name="Talla E."/>
            <person name="Goffard N."/>
            <person name="Frangeul L."/>
            <person name="Aigle M."/>
            <person name="Anthouard V."/>
            <person name="Babour A."/>
            <person name="Barbe V."/>
            <person name="Barnay S."/>
            <person name="Blanchin S."/>
            <person name="Beckerich J.-M."/>
            <person name="Beyne E."/>
            <person name="Bleykasten C."/>
            <person name="Boisrame A."/>
            <person name="Boyer J."/>
            <person name="Cattolico L."/>
            <person name="Confanioleri F."/>
            <person name="de Daruvar A."/>
            <person name="Despons L."/>
            <person name="Fabre E."/>
            <person name="Fairhead C."/>
            <person name="Ferry-Dumazet H."/>
            <person name="Groppi A."/>
            <person name="Hantraye F."/>
            <person name="Hennequin C."/>
            <person name="Jauniaux N."/>
            <person name="Joyet P."/>
            <person name="Kachouri R."/>
            <person name="Kerrest A."/>
            <person name="Koszul R."/>
            <person name="Lemaire M."/>
            <person name="Lesur I."/>
            <person name="Ma L."/>
            <person name="Muller H."/>
            <person name="Nicaud J.-M."/>
            <person name="Nikolski M."/>
            <person name="Oztas S."/>
            <person name="Ozier-Kalogeropoulos O."/>
            <person name="Pellenz S."/>
            <person name="Potier S."/>
            <person name="Richard G.-F."/>
            <person name="Straub M.-L."/>
            <person name="Suleau A."/>
            <person name="Swennen D."/>
            <person name="Tekaia F."/>
            <person name="Wesolowski-Louvel M."/>
            <person name="Westhof E."/>
            <person name="Wirth B."/>
            <person name="Zeniou-Meyer M."/>
            <person name="Zivanovic Y."/>
            <person name="Bolotin-Fukuhara M."/>
            <person name="Thierry A."/>
            <person name="Bouchier C."/>
            <person name="Caudron B."/>
            <person name="Scarpelli C."/>
            <person name="Gaillardin C."/>
            <person name="Weissenbach J."/>
            <person name="Wincker P."/>
            <person name="Souciet J.-L."/>
        </authorList>
    </citation>
    <scope>NUCLEOTIDE SEQUENCE [LARGE SCALE GENOMIC DNA]</scope>
    <source>
        <strain>ATCC 8585 / CBS 2359 / DSM 70799 / NBRC 1267 / NRRL Y-1140 / WM37</strain>
    </source>
</reference>
<reference key="2">
    <citation type="thesis" date="2001" institute="Universidad de La coruna" country="Spain">
        <authorList>
            <person name="Lamas-Maceiras M."/>
        </authorList>
    </citation>
    <scope>NUCLEOTIDE SEQUENCE [GENOMIC DNA] OF 1-128</scope>
</reference>
<accession>Q6CUY0</accession>
<accession>Q8X1Y8</accession>
<feature type="transit peptide" description="Mitochondrion" evidence="3">
    <location>
        <begin position="1"/>
        <end position="21"/>
    </location>
</feature>
<feature type="chain" id="PRO_0000042748" description="Succinate dehydrogenase assembly factor 3, mitochondrial">
    <location>
        <begin position="22"/>
        <end position="129"/>
    </location>
</feature>
<comment type="function">
    <text evidence="1 2">Plays an essential role in the assembly of succinate dehydrogenase (SDH), an enzyme complex (also referred to as respiratory complex II) that is a component of both the tricarboxylic acid (TCA) cycle and the mitochondrial electron transport chain, and which couples the oxidation of succinate to fumarate with the reduction of ubiquinone (coenzyme Q) to ubiquinol. Promotes maturation of the iron-sulfur protein subunit of the SDH catalytic dimer, protecting it from the deleterious effects of oxidants. May act together with SDHAF1.</text>
</comment>
<comment type="subunit">
    <text evidence="1">Interacts with the iron-sulfur protein subunit within the SDH catalytic dimer.</text>
</comment>
<comment type="subcellular location">
    <subcellularLocation>
        <location evidence="1">Mitochondrion matrix</location>
    </subcellularLocation>
</comment>
<comment type="similarity">
    <text evidence="4">Belongs to the complex I LYR family. SDHAF3 subfamily.</text>
</comment>
<proteinExistence type="inferred from homology"/>
<sequence length="129" mass="15155">MQVNHLLRQAVKQTTRAGRLGSRKPHKPLLPPLQLYRRILREHRNLPTMQRELGDQYVKNEFKLHKSTDNPLYIVGFLASWQDYLHMITRGEWEEGTLSTDLLEKMSPEQVTQLYELMKEAEQLKSGGE</sequence>